<organism>
    <name type="scientific">Solenopsis geminata</name>
    <name type="common">Tropical fire ant</name>
    <dbReference type="NCBI Taxonomy" id="121131"/>
    <lineage>
        <taxon>Eukaryota</taxon>
        <taxon>Metazoa</taxon>
        <taxon>Ecdysozoa</taxon>
        <taxon>Arthropoda</taxon>
        <taxon>Hexapoda</taxon>
        <taxon>Insecta</taxon>
        <taxon>Pterygota</taxon>
        <taxon>Neoptera</taxon>
        <taxon>Endopterygota</taxon>
        <taxon>Hymenoptera</taxon>
        <taxon>Apocrita</taxon>
        <taxon>Aculeata</taxon>
        <taxon>Formicoidea</taxon>
        <taxon>Formicidae</taxon>
        <taxon>Myrmicinae</taxon>
        <taxon>Solenopsis</taxon>
    </lineage>
</organism>
<sequence length="153" mass="16863">MKTFVLHIFIFAFVAFASASRDSAKKIGSQYDNFETCITEHGLTEDDIFSIGEVSSGNHKTNHEDTELHKNGCVIQCMLEKDGLMSGADYDEEKMREDYIKETGAQPGDQRIEALNACMHETKDMEDKCDKSLVLVACVLAAEAVLADSSEAA</sequence>
<dbReference type="EMBL" id="AF427905">
    <property type="protein sequence ID" value="AAL51131.1"/>
    <property type="molecule type" value="Genomic_DNA"/>
</dbReference>
<dbReference type="EMBL" id="AY818618">
    <property type="protein sequence ID" value="AAW80685.1"/>
    <property type="molecule type" value="Genomic_DNA"/>
</dbReference>
<dbReference type="EMBL" id="AY818619">
    <property type="protein sequence ID" value="AAW80686.1"/>
    <property type="molecule type" value="Genomic_DNA"/>
</dbReference>
<dbReference type="EMBL" id="AY818620">
    <property type="protein sequence ID" value="AAW80687.1"/>
    <property type="molecule type" value="Genomic_DNA"/>
</dbReference>
<dbReference type="EMBL" id="AY818621">
    <property type="protein sequence ID" value="AAW80688.1"/>
    <property type="molecule type" value="Genomic_DNA"/>
</dbReference>
<dbReference type="EMBL" id="AY818622">
    <property type="protein sequence ID" value="AAW80689.1"/>
    <property type="molecule type" value="Genomic_DNA"/>
</dbReference>
<dbReference type="SMR" id="Q5EP12"/>
<dbReference type="GO" id="GO:0005615">
    <property type="term" value="C:extracellular space"/>
    <property type="evidence" value="ECO:0000250"/>
    <property type="project" value="UniProtKB"/>
</dbReference>
<dbReference type="GO" id="GO:0005550">
    <property type="term" value="F:pheromone binding"/>
    <property type="evidence" value="ECO:0007669"/>
    <property type="project" value="UniProtKB-KW"/>
</dbReference>
<dbReference type="GO" id="GO:0019236">
    <property type="term" value="P:response to pheromone"/>
    <property type="evidence" value="ECO:0007669"/>
    <property type="project" value="UniProtKB-KW"/>
</dbReference>
<dbReference type="GO" id="GO:0035176">
    <property type="term" value="P:social behavior"/>
    <property type="evidence" value="ECO:0000250"/>
    <property type="project" value="UniProtKB"/>
</dbReference>
<dbReference type="CDD" id="cd23992">
    <property type="entry name" value="PBP_GOBP"/>
    <property type="match status" value="1"/>
</dbReference>
<dbReference type="FunFam" id="1.10.238.20:FF:000004">
    <property type="entry name" value="Pheromone-binding protein Gp-9"/>
    <property type="match status" value="1"/>
</dbReference>
<dbReference type="Gene3D" id="1.10.238.20">
    <property type="entry name" value="Pheromone/general odorant binding protein domain"/>
    <property type="match status" value="1"/>
</dbReference>
<dbReference type="InterPro" id="IPR006170">
    <property type="entry name" value="PBP/GOBP"/>
</dbReference>
<dbReference type="InterPro" id="IPR036728">
    <property type="entry name" value="PBP_GOBP_sf"/>
</dbReference>
<dbReference type="InterPro" id="IPR022354">
    <property type="entry name" value="Pheromone-bd_protein_Gp-9"/>
</dbReference>
<dbReference type="Pfam" id="PF01395">
    <property type="entry name" value="PBP_GOBP"/>
    <property type="match status" value="1"/>
</dbReference>
<dbReference type="PRINTS" id="PR02007">
    <property type="entry name" value="ODORANTBPGP9"/>
</dbReference>
<dbReference type="SUPFAM" id="SSF47565">
    <property type="entry name" value="Insect pheromone/odorant-binding proteins"/>
    <property type="match status" value="1"/>
</dbReference>
<accession>Q5EP12</accession>
<accession>Q5EP09</accession>
<accession>Q5EP10</accession>
<accession>Q8WRP7</accession>
<keyword id="KW-0085">Behavior</keyword>
<keyword id="KW-1015">Disulfide bond</keyword>
<keyword id="KW-0589">Pheromone response</keyword>
<keyword id="KW-0590">Pheromone-binding</keyword>
<keyword id="KW-0964">Secreted</keyword>
<keyword id="KW-0732">Signal</keyword>
<keyword id="KW-0813">Transport</keyword>
<reference evidence="7" key="1">
    <citation type="journal article" date="2002" name="Science">
        <title>Identification of a major gene regulating complex social behavior.</title>
        <authorList>
            <person name="Krieger M.J.B."/>
            <person name="Ross K.G."/>
        </authorList>
    </citation>
    <scope>NUCLEOTIDE SEQUENCE [GENOMIC DNA]</scope>
</reference>
<reference evidence="6 8" key="2">
    <citation type="journal article" date="2005" name="Mol. Biol. Evol.">
        <title>Molecular evolutionary analyses of the odorant-binding protein gene Gp-9 in fire ants and other Solenopsis species.</title>
        <authorList>
            <person name="Krieger M.J.B."/>
            <person name="Ross K.G."/>
        </authorList>
    </citation>
    <scope>NUCLEOTIDE SEQUENCE [GENOMIC DNA] (ALLELES B2; B3; B4; B5 AND B6)</scope>
    <scope>VARIANTS VAL-17; THR-56; GLN-120; ILE-134 AND GLY-152</scope>
</reference>
<protein>
    <recommendedName>
        <fullName>Pheromone-binding protein Gp-9</fullName>
        <shortName>PBP</shortName>
    </recommendedName>
    <alternativeName>
        <fullName>Putative odorant-binding protein Gp-9</fullName>
    </alternativeName>
</protein>
<evidence type="ECO:0000250" key="1"/>
<evidence type="ECO:0000250" key="2">
    <source>
        <dbReference type="UniProtKB" id="P20797"/>
    </source>
</evidence>
<evidence type="ECO:0000250" key="3">
    <source>
        <dbReference type="UniProtKB" id="Q8WP90"/>
    </source>
</evidence>
<evidence type="ECO:0000255" key="4"/>
<evidence type="ECO:0000269" key="5">
    <source>
    </source>
</evidence>
<evidence type="ECO:0000305" key="6"/>
<evidence type="ECO:0000312" key="7">
    <source>
        <dbReference type="EMBL" id="AAL51131.1"/>
    </source>
</evidence>
<evidence type="ECO:0000312" key="8">
    <source>
        <dbReference type="EMBL" id="AAW80685.1"/>
    </source>
</evidence>
<evidence type="ECO:0000312" key="9">
    <source>
        <dbReference type="EMBL" id="AAW80686.1"/>
    </source>
</evidence>
<feature type="signal peptide" evidence="3">
    <location>
        <begin position="1"/>
        <end position="19"/>
    </location>
</feature>
<feature type="chain" id="PRO_5000094263" description="Pheromone-binding protein Gp-9" evidence="3">
    <location>
        <begin position="20"/>
        <end position="153"/>
    </location>
</feature>
<feature type="disulfide bond" evidence="2">
    <location>
        <begin position="37"/>
        <end position="77"/>
    </location>
</feature>
<feature type="disulfide bond" evidence="2">
    <location>
        <begin position="73"/>
        <end position="129"/>
    </location>
</feature>
<feature type="disulfide bond" evidence="2">
    <location>
        <begin position="118"/>
        <end position="138"/>
    </location>
</feature>
<feature type="sequence variant" description="In allele B4 and allele B5." evidence="5">
    <original>A</original>
    <variation>V</variation>
    <location>
        <position position="17"/>
    </location>
</feature>
<feature type="sequence variant" description="In allele B6." evidence="5">
    <original>S</original>
    <variation>T</variation>
    <location>
        <position position="56"/>
    </location>
</feature>
<feature type="sequence variant" description="In allele B4, allele B5 and allele B6." evidence="5">
    <original>H</original>
    <variation>Q</variation>
    <location>
        <position position="120"/>
    </location>
</feature>
<feature type="sequence variant" description="In allele B4, allele B5 and allele B6." evidence="5">
    <original>V</original>
    <variation>I</variation>
    <location>
        <position position="134"/>
    </location>
</feature>
<feature type="sequence variant" description="In allele B4, allele B5 and allele B6." evidence="5">
    <original>A</original>
    <variation>G</variation>
    <location>
        <position position="152"/>
    </location>
</feature>
<gene>
    <name evidence="9" type="primary">Gp-9</name>
</gene>
<comment type="function">
    <text evidence="3">Colony queen number, a major feature of social organization, is associated with worker genotype for Gp-9. Colonies are headed by either a single reproductive queen (monogyne form) or multiple queens (polygyne form). Differences in worker Gp-9 genotypes between social forms may cause differences in workers' abilities to recognize queens and regulate their numbers (By similarity).</text>
</comment>
<comment type="subunit">
    <text evidence="2">Homodimer.</text>
</comment>
<comment type="subcellular location">
    <subcellularLocation>
        <location evidence="1">Secreted</location>
    </subcellularLocation>
</comment>
<comment type="polymorphism">
    <text evidence="5">Alleles B2 and B3 are shown, monogyne population from Brazil.</text>
</comment>
<comment type="similarity">
    <text evidence="4">Belongs to the PBP/GOBP family.</text>
</comment>
<name>PBGP9_SOLGE</name>
<proteinExistence type="inferred from homology"/>